<keyword id="KW-0119">Carbohydrate metabolism</keyword>
<keyword id="KW-0378">Hydrolase</keyword>
<keyword id="KW-0460">Magnesium</keyword>
<keyword id="KW-0479">Metal-binding</keyword>
<feature type="chain" id="PRO_1000139818" description="Carbohydrate deacetylase">
    <location>
        <begin position="1"/>
        <end position="235"/>
    </location>
</feature>
<feature type="binding site" evidence="1">
    <location>
        <position position="61"/>
    </location>
    <ligand>
        <name>Mg(2+)</name>
        <dbReference type="ChEBI" id="CHEBI:18420"/>
    </ligand>
</feature>
<feature type="binding site" evidence="1">
    <location>
        <position position="124"/>
    </location>
    <ligand>
        <name>Mg(2+)</name>
        <dbReference type="ChEBI" id="CHEBI:18420"/>
    </ligand>
</feature>
<protein>
    <recommendedName>
        <fullName evidence="1">Carbohydrate deacetylase</fullName>
        <ecNumber evidence="1">3.5.1.-</ecNumber>
    </recommendedName>
</protein>
<organism>
    <name type="scientific">Bacillus cereus (strain B4264)</name>
    <dbReference type="NCBI Taxonomy" id="405532"/>
    <lineage>
        <taxon>Bacteria</taxon>
        <taxon>Bacillati</taxon>
        <taxon>Bacillota</taxon>
        <taxon>Bacilli</taxon>
        <taxon>Bacillales</taxon>
        <taxon>Bacillaceae</taxon>
        <taxon>Bacillus</taxon>
        <taxon>Bacillus cereus group</taxon>
    </lineage>
</organism>
<comment type="function">
    <text evidence="1">Probably catalyzes the deacetylation of acetylated carbohydrates an important step in the degradation of oligosaccharides.</text>
</comment>
<comment type="cofactor">
    <cofactor evidence="1">
        <name>Mg(2+)</name>
        <dbReference type="ChEBI" id="CHEBI:18420"/>
    </cofactor>
</comment>
<comment type="similarity">
    <text evidence="1">Belongs to the YdjC deacetylase family.</text>
</comment>
<reference key="1">
    <citation type="submission" date="2008-10" db="EMBL/GenBank/DDBJ databases">
        <title>Genome sequence of Bacillus cereus B4264.</title>
        <authorList>
            <person name="Dodson R.J."/>
            <person name="Durkin A.S."/>
            <person name="Rosovitz M.J."/>
            <person name="Rasko D.A."/>
            <person name="Hoffmaster A."/>
            <person name="Ravel J."/>
            <person name="Sutton G."/>
        </authorList>
    </citation>
    <scope>NUCLEOTIDE SEQUENCE [LARGE SCALE GENOMIC DNA]</scope>
    <source>
        <strain>B4264</strain>
    </source>
</reference>
<proteinExistence type="inferred from homology"/>
<evidence type="ECO:0000255" key="1">
    <source>
        <dbReference type="HAMAP-Rule" id="MF_01246"/>
    </source>
</evidence>
<gene>
    <name type="ordered locus">BCB4264_A5327</name>
</gene>
<accession>B7HEK8</accession>
<dbReference type="EC" id="3.5.1.-" evidence="1"/>
<dbReference type="EMBL" id="CP001176">
    <property type="protein sequence ID" value="ACK63542.1"/>
    <property type="molecule type" value="Genomic_DNA"/>
</dbReference>
<dbReference type="SMR" id="B7HEK8"/>
<dbReference type="KEGG" id="bcb:BCB4264_A5327"/>
<dbReference type="HOGENOM" id="CLU_064244_4_0_9"/>
<dbReference type="Proteomes" id="UP000007096">
    <property type="component" value="Chromosome"/>
</dbReference>
<dbReference type="GO" id="GO:0019213">
    <property type="term" value="F:deacetylase activity"/>
    <property type="evidence" value="ECO:0007669"/>
    <property type="project" value="TreeGrafter"/>
</dbReference>
<dbReference type="GO" id="GO:0016811">
    <property type="term" value="F:hydrolase activity, acting on carbon-nitrogen (but not peptide) bonds, in linear amides"/>
    <property type="evidence" value="ECO:0007669"/>
    <property type="project" value="UniProtKB-UniRule"/>
</dbReference>
<dbReference type="GO" id="GO:0046872">
    <property type="term" value="F:metal ion binding"/>
    <property type="evidence" value="ECO:0007669"/>
    <property type="project" value="UniProtKB-KW"/>
</dbReference>
<dbReference type="GO" id="GO:0000272">
    <property type="term" value="P:polysaccharide catabolic process"/>
    <property type="evidence" value="ECO:0007669"/>
    <property type="project" value="InterPro"/>
</dbReference>
<dbReference type="CDD" id="cd10803">
    <property type="entry name" value="YdjC_EF3048_like"/>
    <property type="match status" value="1"/>
</dbReference>
<dbReference type="FunFam" id="3.20.20.370:FF:000011">
    <property type="entry name" value="Carbohydrate deacetylase"/>
    <property type="match status" value="1"/>
</dbReference>
<dbReference type="Gene3D" id="3.20.20.370">
    <property type="entry name" value="Glycoside hydrolase/deacetylase"/>
    <property type="match status" value="1"/>
</dbReference>
<dbReference type="HAMAP" id="MF_01246">
    <property type="entry name" value="COD"/>
    <property type="match status" value="1"/>
</dbReference>
<dbReference type="InterPro" id="IPR022948">
    <property type="entry name" value="COD_ChbG_bac"/>
</dbReference>
<dbReference type="InterPro" id="IPR011330">
    <property type="entry name" value="Glyco_hydro/deAcase_b/a-brl"/>
</dbReference>
<dbReference type="InterPro" id="IPR006879">
    <property type="entry name" value="YdjC-like"/>
</dbReference>
<dbReference type="NCBIfam" id="NF002559">
    <property type="entry name" value="PRK02134.1"/>
    <property type="match status" value="1"/>
</dbReference>
<dbReference type="PANTHER" id="PTHR31609:SF1">
    <property type="entry name" value="CARBOHYDRATE DEACETYLASE"/>
    <property type="match status" value="1"/>
</dbReference>
<dbReference type="PANTHER" id="PTHR31609">
    <property type="entry name" value="YDJC DEACETYLASE FAMILY MEMBER"/>
    <property type="match status" value="1"/>
</dbReference>
<dbReference type="Pfam" id="PF04794">
    <property type="entry name" value="YdjC"/>
    <property type="match status" value="1"/>
</dbReference>
<dbReference type="SUPFAM" id="SSF88713">
    <property type="entry name" value="Glycoside hydrolase/deacetylase"/>
    <property type="match status" value="1"/>
</dbReference>
<sequence length="235" mass="26610">MMIKLIVNADDFGLTEGTNYGIIDGHINGLVNSTTMMMNMPGTEHAVRLAKEYNLLGVGVHLVLTAGEPLLKDVPSLVGENGSFHKQSVVREGNINPEEVEREWTAQIEKFLSYGLTPTHLDSHHHVHGLPILHDVLERLAAKYNVPIRRCEEDRAVHPFSDVFYSDFYADGVTEDYFVKLKERVQGEQTVEIMVHPAYIDPELVKRSSYVMDRVKELRILTESELPEGIELVKF</sequence>
<name>YDJC_BACC4</name>